<evidence type="ECO:0000255" key="1">
    <source>
        <dbReference type="HAMAP-Rule" id="MF_00523"/>
    </source>
</evidence>
<dbReference type="EC" id="2.3.1.191" evidence="1"/>
<dbReference type="EMBL" id="AJ749949">
    <property type="protein sequence ID" value="CAG46204.1"/>
    <property type="molecule type" value="Genomic_DNA"/>
</dbReference>
<dbReference type="RefSeq" id="YP_170493.1">
    <property type="nucleotide sequence ID" value="NC_006570.2"/>
</dbReference>
<dbReference type="SMR" id="Q5NEP9"/>
<dbReference type="STRING" id="177416.FTT_1571c"/>
<dbReference type="DNASU" id="3190807"/>
<dbReference type="EnsemblBacteria" id="CAG46204">
    <property type="protein sequence ID" value="CAG46204"/>
    <property type="gene ID" value="FTT_1571c"/>
</dbReference>
<dbReference type="KEGG" id="ftu:FTT_1571c"/>
<dbReference type="eggNOG" id="COG1044">
    <property type="taxonomic scope" value="Bacteria"/>
</dbReference>
<dbReference type="OrthoDB" id="9784739at2"/>
<dbReference type="UniPathway" id="UPA00973"/>
<dbReference type="Proteomes" id="UP000001174">
    <property type="component" value="Chromosome"/>
</dbReference>
<dbReference type="GO" id="GO:0016020">
    <property type="term" value="C:membrane"/>
    <property type="evidence" value="ECO:0007669"/>
    <property type="project" value="GOC"/>
</dbReference>
<dbReference type="GO" id="GO:0016410">
    <property type="term" value="F:N-acyltransferase activity"/>
    <property type="evidence" value="ECO:0007669"/>
    <property type="project" value="InterPro"/>
</dbReference>
<dbReference type="GO" id="GO:0009245">
    <property type="term" value="P:lipid A biosynthetic process"/>
    <property type="evidence" value="ECO:0007669"/>
    <property type="project" value="UniProtKB-UniRule"/>
</dbReference>
<dbReference type="CDD" id="cd03352">
    <property type="entry name" value="LbH_LpxD"/>
    <property type="match status" value="1"/>
</dbReference>
<dbReference type="Gene3D" id="2.160.10.10">
    <property type="entry name" value="Hexapeptide repeat proteins"/>
    <property type="match status" value="1"/>
</dbReference>
<dbReference type="Gene3D" id="3.40.1390.10">
    <property type="entry name" value="MurE/MurF, N-terminal domain"/>
    <property type="match status" value="1"/>
</dbReference>
<dbReference type="HAMAP" id="MF_00523">
    <property type="entry name" value="LpxD"/>
    <property type="match status" value="1"/>
</dbReference>
<dbReference type="InterPro" id="IPR001451">
    <property type="entry name" value="Hexapep"/>
</dbReference>
<dbReference type="InterPro" id="IPR018357">
    <property type="entry name" value="Hexapep_transf_CS"/>
</dbReference>
<dbReference type="InterPro" id="IPR007691">
    <property type="entry name" value="LpxD"/>
</dbReference>
<dbReference type="InterPro" id="IPR011004">
    <property type="entry name" value="Trimer_LpxA-like_sf"/>
</dbReference>
<dbReference type="InterPro" id="IPR020573">
    <property type="entry name" value="UDP_GlcNAc_AcTrfase_non-rep"/>
</dbReference>
<dbReference type="NCBIfam" id="TIGR01853">
    <property type="entry name" value="lipid_A_lpxD"/>
    <property type="match status" value="1"/>
</dbReference>
<dbReference type="NCBIfam" id="NF002060">
    <property type="entry name" value="PRK00892.1"/>
    <property type="match status" value="1"/>
</dbReference>
<dbReference type="PANTHER" id="PTHR43378">
    <property type="entry name" value="UDP-3-O-ACYLGLUCOSAMINE N-ACYLTRANSFERASE"/>
    <property type="match status" value="1"/>
</dbReference>
<dbReference type="PANTHER" id="PTHR43378:SF2">
    <property type="entry name" value="UDP-3-O-ACYLGLUCOSAMINE N-ACYLTRANSFERASE 1, MITOCHONDRIAL-RELATED"/>
    <property type="match status" value="1"/>
</dbReference>
<dbReference type="Pfam" id="PF00132">
    <property type="entry name" value="Hexapep"/>
    <property type="match status" value="2"/>
</dbReference>
<dbReference type="Pfam" id="PF14602">
    <property type="entry name" value="Hexapep_2"/>
    <property type="match status" value="1"/>
</dbReference>
<dbReference type="Pfam" id="PF04613">
    <property type="entry name" value="LpxD"/>
    <property type="match status" value="1"/>
</dbReference>
<dbReference type="SUPFAM" id="SSF51161">
    <property type="entry name" value="Trimeric LpxA-like enzymes"/>
    <property type="match status" value="1"/>
</dbReference>
<dbReference type="PROSITE" id="PS00101">
    <property type="entry name" value="HEXAPEP_TRANSFERASES"/>
    <property type="match status" value="2"/>
</dbReference>
<accession>Q5NEP9</accession>
<comment type="function">
    <text evidence="1">Catalyzes the N-acylation of UDP-3-O-acylglucosamine using 3-hydroxyacyl-ACP as the acyl donor. Is involved in the biosynthesis of lipid A, a phosphorylated glycolipid that anchors the lipopolysaccharide to the outer membrane of the cell.</text>
</comment>
<comment type="catalytic activity">
    <reaction evidence="1">
        <text>a UDP-3-O-[(3R)-3-hydroxyacyl]-alpha-D-glucosamine + a (3R)-hydroxyacyl-[ACP] = a UDP-2-N,3-O-bis[(3R)-3-hydroxyacyl]-alpha-D-glucosamine + holo-[ACP] + H(+)</text>
        <dbReference type="Rhea" id="RHEA:53836"/>
        <dbReference type="Rhea" id="RHEA-COMP:9685"/>
        <dbReference type="Rhea" id="RHEA-COMP:9945"/>
        <dbReference type="ChEBI" id="CHEBI:15378"/>
        <dbReference type="ChEBI" id="CHEBI:64479"/>
        <dbReference type="ChEBI" id="CHEBI:78827"/>
        <dbReference type="ChEBI" id="CHEBI:137740"/>
        <dbReference type="ChEBI" id="CHEBI:137748"/>
        <dbReference type="EC" id="2.3.1.191"/>
    </reaction>
</comment>
<comment type="pathway">
    <text evidence="1">Bacterial outer membrane biogenesis; LPS lipid A biosynthesis.</text>
</comment>
<comment type="subunit">
    <text evidence="1">Homotrimer.</text>
</comment>
<comment type="similarity">
    <text evidence="1">Belongs to the transferase hexapeptide repeat family. LpxD subfamily.</text>
</comment>
<protein>
    <recommendedName>
        <fullName evidence="1">UDP-3-O-acylglucosamine N-acyltransferase 2</fullName>
        <ecNumber evidence="1">2.3.1.191</ecNumber>
    </recommendedName>
</protein>
<organism>
    <name type="scientific">Francisella tularensis subsp. tularensis (strain SCHU S4 / Schu 4)</name>
    <dbReference type="NCBI Taxonomy" id="177416"/>
    <lineage>
        <taxon>Bacteria</taxon>
        <taxon>Pseudomonadati</taxon>
        <taxon>Pseudomonadota</taxon>
        <taxon>Gammaproteobacteria</taxon>
        <taxon>Thiotrichales</taxon>
        <taxon>Francisellaceae</taxon>
        <taxon>Francisella</taxon>
    </lineage>
</organism>
<keyword id="KW-0012">Acyltransferase</keyword>
<keyword id="KW-0441">Lipid A biosynthesis</keyword>
<keyword id="KW-0444">Lipid biosynthesis</keyword>
<keyword id="KW-0443">Lipid metabolism</keyword>
<keyword id="KW-1185">Reference proteome</keyword>
<keyword id="KW-0677">Repeat</keyword>
<keyword id="KW-0808">Transferase</keyword>
<reference key="1">
    <citation type="journal article" date="2005" name="Nat. Genet.">
        <title>The complete genome sequence of Francisella tularensis, the causative agent of tularemia.</title>
        <authorList>
            <person name="Larsson P."/>
            <person name="Oyston P.C.F."/>
            <person name="Chain P."/>
            <person name="Chu M.C."/>
            <person name="Duffield M."/>
            <person name="Fuxelius H.-H."/>
            <person name="Garcia E."/>
            <person name="Haelltorp G."/>
            <person name="Johansson D."/>
            <person name="Isherwood K.E."/>
            <person name="Karp P.D."/>
            <person name="Larsson E."/>
            <person name="Liu Y."/>
            <person name="Michell S."/>
            <person name="Prior J."/>
            <person name="Prior R."/>
            <person name="Malfatti S."/>
            <person name="Sjoestedt A."/>
            <person name="Svensson K."/>
            <person name="Thompson N."/>
            <person name="Vergez L."/>
            <person name="Wagg J.K."/>
            <person name="Wren B.W."/>
            <person name="Lindler L.E."/>
            <person name="Andersson S.G.E."/>
            <person name="Forsman M."/>
            <person name="Titball R.W."/>
        </authorList>
    </citation>
    <scope>NUCLEOTIDE SEQUENCE [LARGE SCALE GENOMIC DNA]</scope>
    <source>
        <strain>SCHU S4 / Schu 4</strain>
    </source>
</reference>
<sequence length="337" mass="35443">MYSLDFLASKLDGEVKGDKNVEIKKIATLSQAGEGDISFCTNPKYLKALSETKASAVLITEEVLEFCNTNAVVLSNPYMALAKVMELFDKSPRPDGKIHSKAVIAASAIIGENVTIGANAVVGENVVIGDNVYIGACATIDNGTKIGNDTLIKSNVSIAHDVVIGTGCIIHQNAVIGCDGFGNARDEDGSWTKIPQLGRVIIEDDVEIGSGTTVDRGAIDDTIIKKGARIDNLVQIAHNVVIGRNTALAGVTAVAGSTTIGDNCLIGGQSAITGHISICDNTIIGGASNIGKSITKPGMYYAAFEAKPRIQWGRFVAKLAKIDTLITKVKQLEEKIK</sequence>
<feature type="chain" id="PRO_0000264373" description="UDP-3-O-acylglucosamine N-acyltransferase 2">
    <location>
        <begin position="1"/>
        <end position="337"/>
    </location>
</feature>
<feature type="active site" description="Proton acceptor" evidence="1">
    <location>
        <position position="238"/>
    </location>
</feature>
<gene>
    <name evidence="1" type="primary">lpxD2</name>
    <name type="synonym">lpxD1</name>
    <name type="ordered locus">FTT_1571c</name>
</gene>
<name>LPXD2_FRATT</name>
<proteinExistence type="inferred from homology"/>